<organism>
    <name type="scientific">Salmonella enteritidis PT4 (strain P125109)</name>
    <dbReference type="NCBI Taxonomy" id="550537"/>
    <lineage>
        <taxon>Bacteria</taxon>
        <taxon>Pseudomonadati</taxon>
        <taxon>Pseudomonadota</taxon>
        <taxon>Gammaproteobacteria</taxon>
        <taxon>Enterobacterales</taxon>
        <taxon>Enterobacteriaceae</taxon>
        <taxon>Salmonella</taxon>
    </lineage>
</organism>
<proteinExistence type="inferred from homology"/>
<gene>
    <name evidence="1" type="primary">yfiC</name>
    <name type="ordered locus">SEN2569</name>
</gene>
<dbReference type="EC" id="2.1.1.223" evidence="1"/>
<dbReference type="EMBL" id="AM933172">
    <property type="protein sequence ID" value="CAR34151.1"/>
    <property type="molecule type" value="Genomic_DNA"/>
</dbReference>
<dbReference type="SMR" id="B5QTV6"/>
<dbReference type="KEGG" id="set:SEN2569"/>
<dbReference type="HOGENOM" id="CLU_061983_0_0_6"/>
<dbReference type="Proteomes" id="UP000000613">
    <property type="component" value="Chromosome"/>
</dbReference>
<dbReference type="GO" id="GO:0005737">
    <property type="term" value="C:cytoplasm"/>
    <property type="evidence" value="ECO:0007669"/>
    <property type="project" value="UniProtKB-SubCell"/>
</dbReference>
<dbReference type="GO" id="GO:0003676">
    <property type="term" value="F:nucleic acid binding"/>
    <property type="evidence" value="ECO:0007669"/>
    <property type="project" value="InterPro"/>
</dbReference>
<dbReference type="GO" id="GO:0016430">
    <property type="term" value="F:tRNA (adenine-N6)-methyltransferase activity"/>
    <property type="evidence" value="ECO:0007669"/>
    <property type="project" value="UniProtKB-UniRule"/>
</dbReference>
<dbReference type="GO" id="GO:0032259">
    <property type="term" value="P:methylation"/>
    <property type="evidence" value="ECO:0007669"/>
    <property type="project" value="UniProtKB-KW"/>
</dbReference>
<dbReference type="GO" id="GO:0008033">
    <property type="term" value="P:tRNA processing"/>
    <property type="evidence" value="ECO:0007669"/>
    <property type="project" value="UniProtKB-UniRule"/>
</dbReference>
<dbReference type="CDD" id="cd02440">
    <property type="entry name" value="AdoMet_MTases"/>
    <property type="match status" value="1"/>
</dbReference>
<dbReference type="Gene3D" id="3.40.50.150">
    <property type="entry name" value="Vaccinia Virus protein VP39"/>
    <property type="match status" value="1"/>
</dbReference>
<dbReference type="HAMAP" id="MF_01872">
    <property type="entry name" value="tRNA_methyltr_YfiC"/>
    <property type="match status" value="1"/>
</dbReference>
<dbReference type="InterPro" id="IPR002052">
    <property type="entry name" value="DNA_methylase_N6_adenine_CS"/>
</dbReference>
<dbReference type="InterPro" id="IPR029063">
    <property type="entry name" value="SAM-dependent_MTases_sf"/>
</dbReference>
<dbReference type="InterPro" id="IPR007848">
    <property type="entry name" value="Small_mtfrase_dom"/>
</dbReference>
<dbReference type="InterPro" id="IPR050210">
    <property type="entry name" value="tRNA_Adenine-N(6)_MTase"/>
</dbReference>
<dbReference type="InterPro" id="IPR022882">
    <property type="entry name" value="tRNA_adenine-N6_MeTrfase"/>
</dbReference>
<dbReference type="NCBIfam" id="NF047853">
    <property type="entry name" value="tRm6a37MtseTrmN"/>
    <property type="match status" value="1"/>
</dbReference>
<dbReference type="PANTHER" id="PTHR47739">
    <property type="entry name" value="TRNA1(VAL) (ADENINE(37)-N6)-METHYLTRANSFERASE"/>
    <property type="match status" value="1"/>
</dbReference>
<dbReference type="PANTHER" id="PTHR47739:SF1">
    <property type="entry name" value="TRNA1(VAL) (ADENINE(37)-N6)-METHYLTRANSFERASE"/>
    <property type="match status" value="1"/>
</dbReference>
<dbReference type="Pfam" id="PF05175">
    <property type="entry name" value="MTS"/>
    <property type="match status" value="1"/>
</dbReference>
<dbReference type="SUPFAM" id="SSF53335">
    <property type="entry name" value="S-adenosyl-L-methionine-dependent methyltransferases"/>
    <property type="match status" value="1"/>
</dbReference>
<dbReference type="PROSITE" id="PS00092">
    <property type="entry name" value="N6_MTASE"/>
    <property type="match status" value="1"/>
</dbReference>
<comment type="function">
    <text evidence="1">Specifically methylates the adenine in position 37 of tRNA(1)(Val) (anticodon cmo5UAC).</text>
</comment>
<comment type="catalytic activity">
    <reaction evidence="1">
        <text>adenosine(37) in tRNA1(Val) + S-adenosyl-L-methionine = N(6)-methyladenosine(37) in tRNA1(Val) + S-adenosyl-L-homocysteine + H(+)</text>
        <dbReference type="Rhea" id="RHEA:43160"/>
        <dbReference type="Rhea" id="RHEA-COMP:10369"/>
        <dbReference type="Rhea" id="RHEA-COMP:10370"/>
        <dbReference type="ChEBI" id="CHEBI:15378"/>
        <dbReference type="ChEBI" id="CHEBI:57856"/>
        <dbReference type="ChEBI" id="CHEBI:59789"/>
        <dbReference type="ChEBI" id="CHEBI:74411"/>
        <dbReference type="ChEBI" id="CHEBI:74449"/>
        <dbReference type="EC" id="2.1.1.223"/>
    </reaction>
</comment>
<comment type="subcellular location">
    <subcellularLocation>
        <location evidence="1">Cytoplasm</location>
    </subcellularLocation>
</comment>
<comment type="similarity">
    <text evidence="1">Belongs to the methyltransferase superfamily. tRNA (adenine-N(6)-)-methyltransferase family.</text>
</comment>
<reference key="1">
    <citation type="journal article" date="2008" name="Genome Res.">
        <title>Comparative genome analysis of Salmonella enteritidis PT4 and Salmonella gallinarum 287/91 provides insights into evolutionary and host adaptation pathways.</title>
        <authorList>
            <person name="Thomson N.R."/>
            <person name="Clayton D.J."/>
            <person name="Windhorst D."/>
            <person name="Vernikos G."/>
            <person name="Davidson S."/>
            <person name="Churcher C."/>
            <person name="Quail M.A."/>
            <person name="Stevens M."/>
            <person name="Jones M.A."/>
            <person name="Watson M."/>
            <person name="Barron A."/>
            <person name="Layton A."/>
            <person name="Pickard D."/>
            <person name="Kingsley R.A."/>
            <person name="Bignell A."/>
            <person name="Clark L."/>
            <person name="Harris B."/>
            <person name="Ormond D."/>
            <person name="Abdellah Z."/>
            <person name="Brooks K."/>
            <person name="Cherevach I."/>
            <person name="Chillingworth T."/>
            <person name="Woodward J."/>
            <person name="Norberczak H."/>
            <person name="Lord A."/>
            <person name="Arrowsmith C."/>
            <person name="Jagels K."/>
            <person name="Moule S."/>
            <person name="Mungall K."/>
            <person name="Saunders M."/>
            <person name="Whitehead S."/>
            <person name="Chabalgoity J.A."/>
            <person name="Maskell D."/>
            <person name="Humphreys T."/>
            <person name="Roberts M."/>
            <person name="Barrow P.A."/>
            <person name="Dougan G."/>
            <person name="Parkhill J."/>
        </authorList>
    </citation>
    <scope>NUCLEOTIDE SEQUENCE [LARGE SCALE GENOMIC DNA]</scope>
    <source>
        <strain>P125109</strain>
    </source>
</reference>
<protein>
    <recommendedName>
        <fullName evidence="1">tRNA1(Val) (adenine(37)-N6)-methyltransferase</fullName>
        <ecNumber evidence="1">2.1.1.223</ecNumber>
    </recommendedName>
    <alternativeName>
        <fullName evidence="1">tRNA m6A37 methyltransferase</fullName>
    </alternativeName>
</protein>
<feature type="chain" id="PRO_0000387405" description="tRNA1(Val) (adenine(37)-N6)-methyltransferase">
    <location>
        <begin position="1"/>
        <end position="245"/>
    </location>
</feature>
<name>TRMN6_SALEP</name>
<keyword id="KW-0963">Cytoplasm</keyword>
<keyword id="KW-0489">Methyltransferase</keyword>
<keyword id="KW-0949">S-adenosyl-L-methionine</keyword>
<keyword id="KW-0808">Transferase</keyword>
<keyword id="KW-0819">tRNA processing</keyword>
<accession>B5QTV6</accession>
<sequence length="245" mass="27238">MSQSGSVLRRNGFTFKQFFVAHDRCAMKVGTDGILLGAWAPVADVKRILDIGTGSGLLALMLAQRTDDNVPIDAVELDAGAAMQAQENVAHSPWPHRITVHTDDIQSWAPRQTVRFDLIISNPPYYEPGVECATPQREQARYTATLDHQTLLAIAADCITEDGFFCVVLPEQIGNAFTQQALNMGWHLRLRTDVAENEARLPHRVLLAFSPQAGECFSDRLVIRGSDQHYSESYTALTQAFYLFM</sequence>
<evidence type="ECO:0000255" key="1">
    <source>
        <dbReference type="HAMAP-Rule" id="MF_01872"/>
    </source>
</evidence>